<sequence>MIQQQTRLKVADNSGAKEIMCIRVLGGSHRKWGNIGDVIVASVKSATPGGVVKKGEVVKAVIVRSVKGLRRADGSYIKFDENAAVIIKDDKNPKGTRIFGPVARELRDKEFNKILSLAPEVL</sequence>
<feature type="chain" id="PRO_1000214969" description="Large ribosomal subunit protein uL14">
    <location>
        <begin position="1"/>
        <end position="122"/>
    </location>
</feature>
<proteinExistence type="inferred from homology"/>
<dbReference type="EMBL" id="CP001083">
    <property type="protein sequence ID" value="ACQ51997.1"/>
    <property type="molecule type" value="Genomic_DNA"/>
</dbReference>
<dbReference type="RefSeq" id="WP_003357295.1">
    <property type="nucleotide sequence ID" value="NC_012658.1"/>
</dbReference>
<dbReference type="SMR" id="C3KVP1"/>
<dbReference type="GeneID" id="92940240"/>
<dbReference type="KEGG" id="cbi:CLJ_B3779"/>
<dbReference type="HOGENOM" id="CLU_095071_2_1_9"/>
<dbReference type="Proteomes" id="UP000002333">
    <property type="component" value="Chromosome"/>
</dbReference>
<dbReference type="GO" id="GO:0022625">
    <property type="term" value="C:cytosolic large ribosomal subunit"/>
    <property type="evidence" value="ECO:0007669"/>
    <property type="project" value="TreeGrafter"/>
</dbReference>
<dbReference type="GO" id="GO:0070180">
    <property type="term" value="F:large ribosomal subunit rRNA binding"/>
    <property type="evidence" value="ECO:0007669"/>
    <property type="project" value="TreeGrafter"/>
</dbReference>
<dbReference type="GO" id="GO:0003735">
    <property type="term" value="F:structural constituent of ribosome"/>
    <property type="evidence" value="ECO:0007669"/>
    <property type="project" value="InterPro"/>
</dbReference>
<dbReference type="GO" id="GO:0006412">
    <property type="term" value="P:translation"/>
    <property type="evidence" value="ECO:0007669"/>
    <property type="project" value="UniProtKB-UniRule"/>
</dbReference>
<dbReference type="CDD" id="cd00337">
    <property type="entry name" value="Ribosomal_uL14"/>
    <property type="match status" value="1"/>
</dbReference>
<dbReference type="FunFam" id="2.40.150.20:FF:000001">
    <property type="entry name" value="50S ribosomal protein L14"/>
    <property type="match status" value="1"/>
</dbReference>
<dbReference type="Gene3D" id="2.40.150.20">
    <property type="entry name" value="Ribosomal protein L14"/>
    <property type="match status" value="1"/>
</dbReference>
<dbReference type="HAMAP" id="MF_01367">
    <property type="entry name" value="Ribosomal_uL14"/>
    <property type="match status" value="1"/>
</dbReference>
<dbReference type="InterPro" id="IPR000218">
    <property type="entry name" value="Ribosomal_uL14"/>
</dbReference>
<dbReference type="InterPro" id="IPR005745">
    <property type="entry name" value="Ribosomal_uL14_bac-type"/>
</dbReference>
<dbReference type="InterPro" id="IPR019972">
    <property type="entry name" value="Ribosomal_uL14_CS"/>
</dbReference>
<dbReference type="InterPro" id="IPR036853">
    <property type="entry name" value="Ribosomal_uL14_sf"/>
</dbReference>
<dbReference type="NCBIfam" id="TIGR01067">
    <property type="entry name" value="rplN_bact"/>
    <property type="match status" value="1"/>
</dbReference>
<dbReference type="PANTHER" id="PTHR11761">
    <property type="entry name" value="50S/60S RIBOSOMAL PROTEIN L14/L23"/>
    <property type="match status" value="1"/>
</dbReference>
<dbReference type="PANTHER" id="PTHR11761:SF3">
    <property type="entry name" value="LARGE RIBOSOMAL SUBUNIT PROTEIN UL14M"/>
    <property type="match status" value="1"/>
</dbReference>
<dbReference type="Pfam" id="PF00238">
    <property type="entry name" value="Ribosomal_L14"/>
    <property type="match status" value="1"/>
</dbReference>
<dbReference type="SMART" id="SM01374">
    <property type="entry name" value="Ribosomal_L14"/>
    <property type="match status" value="1"/>
</dbReference>
<dbReference type="SUPFAM" id="SSF50193">
    <property type="entry name" value="Ribosomal protein L14"/>
    <property type="match status" value="1"/>
</dbReference>
<dbReference type="PROSITE" id="PS00049">
    <property type="entry name" value="RIBOSOMAL_L14"/>
    <property type="match status" value="1"/>
</dbReference>
<comment type="function">
    <text evidence="1">Binds to 23S rRNA. Forms part of two intersubunit bridges in the 70S ribosome.</text>
</comment>
<comment type="subunit">
    <text evidence="1">Part of the 50S ribosomal subunit. Forms a cluster with proteins L3 and L19. In the 70S ribosome, L14 and L19 interact and together make contacts with the 16S rRNA in bridges B5 and B8.</text>
</comment>
<comment type="similarity">
    <text evidence="1">Belongs to the universal ribosomal protein uL14 family.</text>
</comment>
<name>RL14_CLOB6</name>
<protein>
    <recommendedName>
        <fullName evidence="1">Large ribosomal subunit protein uL14</fullName>
    </recommendedName>
    <alternativeName>
        <fullName evidence="2">50S ribosomal protein L14</fullName>
    </alternativeName>
</protein>
<gene>
    <name evidence="1" type="primary">rplN</name>
    <name type="ordered locus">CLJ_B3779</name>
</gene>
<accession>C3KVP1</accession>
<reference key="1">
    <citation type="submission" date="2008-05" db="EMBL/GenBank/DDBJ databases">
        <title>Genome sequence of Clostridium botulinum Ba4 strain 657.</title>
        <authorList>
            <person name="Shrivastava S."/>
            <person name="Brown J.L."/>
            <person name="Bruce D."/>
            <person name="Detter C."/>
            <person name="Munk C."/>
            <person name="Smith L.A."/>
            <person name="Smith T.J."/>
            <person name="Sutton G."/>
            <person name="Brettin T.S."/>
        </authorList>
    </citation>
    <scope>NUCLEOTIDE SEQUENCE [LARGE SCALE GENOMIC DNA]</scope>
    <source>
        <strain>657 / Type Ba4</strain>
    </source>
</reference>
<evidence type="ECO:0000255" key="1">
    <source>
        <dbReference type="HAMAP-Rule" id="MF_01367"/>
    </source>
</evidence>
<evidence type="ECO:0000305" key="2"/>
<organism>
    <name type="scientific">Clostridium botulinum (strain 657 / Type Ba4)</name>
    <dbReference type="NCBI Taxonomy" id="515621"/>
    <lineage>
        <taxon>Bacteria</taxon>
        <taxon>Bacillati</taxon>
        <taxon>Bacillota</taxon>
        <taxon>Clostridia</taxon>
        <taxon>Eubacteriales</taxon>
        <taxon>Clostridiaceae</taxon>
        <taxon>Clostridium</taxon>
    </lineage>
</organism>
<keyword id="KW-0687">Ribonucleoprotein</keyword>
<keyword id="KW-0689">Ribosomal protein</keyword>
<keyword id="KW-0694">RNA-binding</keyword>
<keyword id="KW-0699">rRNA-binding</keyword>